<evidence type="ECO:0000255" key="1">
    <source>
        <dbReference type="HAMAP-Rule" id="MF_01867"/>
    </source>
</evidence>
<proteinExistence type="inferred from homology"/>
<dbReference type="EC" id="6.-.-.-" evidence="1"/>
<dbReference type="EMBL" id="AE015929">
    <property type="protein sequence ID" value="AAO04449.1"/>
    <property type="molecule type" value="Genomic_DNA"/>
</dbReference>
<dbReference type="RefSeq" id="NP_764407.1">
    <property type="nucleotide sequence ID" value="NC_004461.1"/>
</dbReference>
<dbReference type="RefSeq" id="WP_002485008.1">
    <property type="nucleotide sequence ID" value="NZ_WBME01000036.1"/>
</dbReference>
<dbReference type="SMR" id="Q8CSX9"/>
<dbReference type="KEGG" id="sep:SE_0852"/>
<dbReference type="PATRIC" id="fig|176280.10.peg.825"/>
<dbReference type="eggNOG" id="COG4365">
    <property type="taxonomic scope" value="Bacteria"/>
</dbReference>
<dbReference type="HOGENOM" id="CLU_022249_1_0_9"/>
<dbReference type="OrthoDB" id="9765151at2"/>
<dbReference type="Proteomes" id="UP000001411">
    <property type="component" value="Chromosome"/>
</dbReference>
<dbReference type="GO" id="GO:0016874">
    <property type="term" value="F:ligase activity"/>
    <property type="evidence" value="ECO:0007669"/>
    <property type="project" value="UniProtKB-UniRule"/>
</dbReference>
<dbReference type="HAMAP" id="MF_01867">
    <property type="entry name" value="BshC"/>
    <property type="match status" value="1"/>
</dbReference>
<dbReference type="InterPro" id="IPR011199">
    <property type="entry name" value="Bacillithiol_biosynth_BshC"/>
</dbReference>
<dbReference type="InterPro" id="IPR055399">
    <property type="entry name" value="CC_BshC"/>
</dbReference>
<dbReference type="InterPro" id="IPR055398">
    <property type="entry name" value="Rossmann-like_BshC"/>
</dbReference>
<dbReference type="NCBIfam" id="TIGR03998">
    <property type="entry name" value="thiol_BshC"/>
    <property type="match status" value="1"/>
</dbReference>
<dbReference type="Pfam" id="PF24850">
    <property type="entry name" value="CC_BshC"/>
    <property type="match status" value="1"/>
</dbReference>
<dbReference type="Pfam" id="PF10079">
    <property type="entry name" value="Rossmann-like_BshC"/>
    <property type="match status" value="1"/>
</dbReference>
<dbReference type="PIRSF" id="PIRSF012535">
    <property type="entry name" value="UCP012535"/>
    <property type="match status" value="1"/>
</dbReference>
<gene>
    <name evidence="1" type="primary">bshC</name>
    <name type="ordered locus">SE_0852</name>
</gene>
<name>BSHC_STAES</name>
<feature type="chain" id="PRO_0000378267" description="Putative cysteine ligase BshC">
    <location>
        <begin position="1"/>
        <end position="537"/>
    </location>
</feature>
<feature type="coiled-coil region" evidence="1">
    <location>
        <begin position="415"/>
        <end position="439"/>
    </location>
</feature>
<sequence>MKCNTLKLTEQDQFINKIKNSESQITSFYEYDAAKKESFYRRLKTPNNGREFHLSRVIKSYMNELKLTHQQLNNIDALADGAKVVIGGQQAGLFGGPLYTFHKIFSIITLSRQLSEEYDTPIVPVFWIAGEDHDFEEVNHTYAFNNKETTLKKVKYHTMTPPDSNVSRYTPDKNELKASLNHFFKEMKETVHTQDVYQMCVNIINQFDSWTDIFKGLIHEVFKDYGILFIDAQYPELRQMEKPLFKEILEKRNQIDQSFRETQIRKTQQQLPSMIQTETNTHLFIHEDGMRQLLNFDGTYFKLNKTEKRYTKQNLLDIIEREPERISNNVVTRPVVEEWLFNTVAFIGGPSEIKYWAELKDVFDTLNVEMPIVMPRLRITYLYARTKKLLKQYNLSIESVIANGVEQERQHFVREKASNNFINEVEEMKIQQQELYNNLFTYVENNHDNQLLLEKNNQIHLNQYDYLIKRYLLNIERENDISMRQFREISETLHPMGGLQERVWNPLQIMNDFGIDVFSPTTYPPLSYSFDHLIINP</sequence>
<comment type="function">
    <text evidence="1">Involved in bacillithiol (BSH) biosynthesis. May catalyze the last step of the pathway, the addition of cysteine to glucosamine malate (GlcN-Mal) to generate BSH.</text>
</comment>
<comment type="similarity">
    <text evidence="1">Belongs to the BshC family.</text>
</comment>
<reference key="1">
    <citation type="journal article" date="2003" name="Mol. Microbiol.">
        <title>Genome-based analysis of virulence genes in a non-biofilm-forming Staphylococcus epidermidis strain (ATCC 12228).</title>
        <authorList>
            <person name="Zhang Y.-Q."/>
            <person name="Ren S.-X."/>
            <person name="Li H.-L."/>
            <person name="Wang Y.-X."/>
            <person name="Fu G."/>
            <person name="Yang J."/>
            <person name="Qin Z.-Q."/>
            <person name="Miao Y.-G."/>
            <person name="Wang W.-Y."/>
            <person name="Chen R.-S."/>
            <person name="Shen Y."/>
            <person name="Chen Z."/>
            <person name="Yuan Z.-H."/>
            <person name="Zhao G.-P."/>
            <person name="Qu D."/>
            <person name="Danchin A."/>
            <person name="Wen Y.-M."/>
        </authorList>
    </citation>
    <scope>NUCLEOTIDE SEQUENCE [LARGE SCALE GENOMIC DNA]</scope>
    <source>
        <strain>ATCC 12228 / FDA PCI 1200</strain>
    </source>
</reference>
<keyword id="KW-0175">Coiled coil</keyword>
<keyword id="KW-0436">Ligase</keyword>
<organism>
    <name type="scientific">Staphylococcus epidermidis (strain ATCC 12228 / FDA PCI 1200)</name>
    <dbReference type="NCBI Taxonomy" id="176280"/>
    <lineage>
        <taxon>Bacteria</taxon>
        <taxon>Bacillati</taxon>
        <taxon>Bacillota</taxon>
        <taxon>Bacilli</taxon>
        <taxon>Bacillales</taxon>
        <taxon>Staphylococcaceae</taxon>
        <taxon>Staphylococcus</taxon>
    </lineage>
</organism>
<accession>Q8CSX9</accession>
<protein>
    <recommendedName>
        <fullName evidence="1">Putative cysteine ligase BshC</fullName>
        <ecNumber evidence="1">6.-.-.-</ecNumber>
    </recommendedName>
</protein>